<dbReference type="EMBL" id="U39941">
    <property type="protein sequence ID" value="AAB68970.1"/>
    <property type="molecule type" value="Genomic_DNA"/>
</dbReference>
<dbReference type="EMBL" id="U95165">
    <property type="protein sequence ID" value="AAB71792.1"/>
    <property type="molecule type" value="Genomic_DNA"/>
</dbReference>
<dbReference type="EMBL" id="AE007869">
    <property type="protein sequence ID" value="AAK86362.1"/>
    <property type="molecule type" value="Genomic_DNA"/>
</dbReference>
<dbReference type="PIR" id="A97426">
    <property type="entry name" value="A97426"/>
</dbReference>
<dbReference type="PIR" id="AI2643">
    <property type="entry name" value="AI2643"/>
</dbReference>
<dbReference type="RefSeq" id="NP_353577.1">
    <property type="nucleotide sequence ID" value="NC_003062.2"/>
</dbReference>
<dbReference type="RefSeq" id="WP_006313014.1">
    <property type="nucleotide sequence ID" value="NC_003062.2"/>
</dbReference>
<dbReference type="SMR" id="Q44340"/>
<dbReference type="STRING" id="176299.Atu0550"/>
<dbReference type="EnsemblBacteria" id="AAK86362">
    <property type="protein sequence ID" value="AAK86362"/>
    <property type="gene ID" value="Atu0550"/>
</dbReference>
<dbReference type="GeneID" id="1132588"/>
<dbReference type="KEGG" id="atu:Atu0550"/>
<dbReference type="PATRIC" id="fig|176299.10.peg.546"/>
<dbReference type="eggNOG" id="COG1706">
    <property type="taxonomic scope" value="Bacteria"/>
</dbReference>
<dbReference type="HOGENOM" id="CLU_045235_1_0_5"/>
<dbReference type="OrthoDB" id="9786431at2"/>
<dbReference type="PhylomeDB" id="Q44340"/>
<dbReference type="BioCyc" id="AGRO:ATU0550-MONOMER"/>
<dbReference type="Proteomes" id="UP000000813">
    <property type="component" value="Chromosome circular"/>
</dbReference>
<dbReference type="GO" id="GO:0009425">
    <property type="term" value="C:bacterial-type flagellum basal body"/>
    <property type="evidence" value="ECO:0000303"/>
    <property type="project" value="PAMGO_GAT"/>
</dbReference>
<dbReference type="GO" id="GO:0009428">
    <property type="term" value="C:bacterial-type flagellum basal body, distal rod, P ring"/>
    <property type="evidence" value="ECO:0007669"/>
    <property type="project" value="InterPro"/>
</dbReference>
<dbReference type="GO" id="GO:0030288">
    <property type="term" value="C:outer membrane-bounded periplasmic space"/>
    <property type="evidence" value="ECO:0007669"/>
    <property type="project" value="InterPro"/>
</dbReference>
<dbReference type="GO" id="GO:0005198">
    <property type="term" value="F:structural molecule activity"/>
    <property type="evidence" value="ECO:0007669"/>
    <property type="project" value="InterPro"/>
</dbReference>
<dbReference type="GO" id="GO:0071973">
    <property type="term" value="P:bacterial-type flagellum-dependent cell motility"/>
    <property type="evidence" value="ECO:0007669"/>
    <property type="project" value="InterPro"/>
</dbReference>
<dbReference type="HAMAP" id="MF_00416">
    <property type="entry name" value="FlgI"/>
    <property type="match status" value="1"/>
</dbReference>
<dbReference type="InterPro" id="IPR001782">
    <property type="entry name" value="Flag_FlgI"/>
</dbReference>
<dbReference type="NCBIfam" id="NF003676">
    <property type="entry name" value="PRK05303.1"/>
    <property type="match status" value="1"/>
</dbReference>
<dbReference type="PANTHER" id="PTHR30381">
    <property type="entry name" value="FLAGELLAR P-RING PERIPLASMIC PROTEIN FLGI"/>
    <property type="match status" value="1"/>
</dbReference>
<dbReference type="PANTHER" id="PTHR30381:SF0">
    <property type="entry name" value="FLAGELLAR P-RING PROTEIN"/>
    <property type="match status" value="1"/>
</dbReference>
<dbReference type="Pfam" id="PF02119">
    <property type="entry name" value="FlgI"/>
    <property type="match status" value="1"/>
</dbReference>
<dbReference type="PRINTS" id="PR01010">
    <property type="entry name" value="FLGPRINGFLGI"/>
</dbReference>
<gene>
    <name type="primary">flgI</name>
    <name type="ordered locus">Atu0550</name>
    <name type="ORF">AGR_C_970</name>
</gene>
<organism>
    <name type="scientific">Agrobacterium fabrum (strain C58 / ATCC 33970)</name>
    <name type="common">Agrobacterium tumefaciens (strain C58)</name>
    <dbReference type="NCBI Taxonomy" id="176299"/>
    <lineage>
        <taxon>Bacteria</taxon>
        <taxon>Pseudomonadati</taxon>
        <taxon>Pseudomonadota</taxon>
        <taxon>Alphaproteobacteria</taxon>
        <taxon>Hyphomicrobiales</taxon>
        <taxon>Rhizobiaceae</taxon>
        <taxon>Rhizobium/Agrobacterium group</taxon>
        <taxon>Agrobacterium</taxon>
        <taxon>Agrobacterium tumefaciens complex</taxon>
    </lineage>
</organism>
<sequence length="373" mass="38968">MRVLRIIAAALVFSALPFLSTPPAQADTSRIKDIASLQAGRDNQLIGYGLVVGLQGTGDSLRSSPFTEQSMRAMLQNLGITTQGGQSNAKNIAAVMVTANLPPFASPGSRVDVTVSSLGDATSLRGGNLIMTSLSGADGQIYAVAQGALIVNGFSAQGDAATLTQGVTTSARVPNGAIIERELPSKFKDSVNLVLQLRNPDFSTAVRVADVVNAFARARYGDPIAEPRDSQEIAVQKPRVADLTRLMAEIENLTVETDTPAKVVINERTGTIVIGADVRISRVAVSYGTLTVQVTESPQVIQPAPFSRGQTAVQPQTDIMAMQEGSKVAIVEGPDLRTLVAGLNSIGLKADGIIAILQGIKSAGALQAELVLQ</sequence>
<proteinExistence type="inferred from homology"/>
<protein>
    <recommendedName>
        <fullName>Flagellar P-ring protein</fullName>
    </recommendedName>
    <alternativeName>
        <fullName>Basal body P-ring protein</fullName>
    </alternativeName>
</protein>
<feature type="signal peptide" evidence="2">
    <location>
        <begin position="1"/>
        <end position="26"/>
    </location>
</feature>
<feature type="chain" id="PRO_0000009492" description="Flagellar P-ring protein">
    <location>
        <begin position="27"/>
        <end position="373"/>
    </location>
</feature>
<keyword id="KW-0975">Bacterial flagellum</keyword>
<keyword id="KW-0574">Periplasm</keyword>
<keyword id="KW-1185">Reference proteome</keyword>
<keyword id="KW-0732">Signal</keyword>
<reference key="1">
    <citation type="journal article" date="1997" name="Gene">
        <title>Isolation and characterisation of a linked cluster of genes from Agrobacterium tumefaciens encoding proteins involved in flagellar basal-body structure.</title>
        <authorList>
            <person name="Deakin W.J."/>
            <person name="Furniss C.S."/>
            <person name="Parker V.E."/>
            <person name="Shaw C.H."/>
        </authorList>
    </citation>
    <scope>NUCLEOTIDE SEQUENCE [GENOMIC DNA]</scope>
</reference>
<reference key="2">
    <citation type="journal article" date="2001" name="Science">
        <title>The genome of the natural genetic engineer Agrobacterium tumefaciens C58.</title>
        <authorList>
            <person name="Wood D.W."/>
            <person name="Setubal J.C."/>
            <person name="Kaul R."/>
            <person name="Monks D.E."/>
            <person name="Kitajima J.P."/>
            <person name="Okura V.K."/>
            <person name="Zhou Y."/>
            <person name="Chen L."/>
            <person name="Wood G.E."/>
            <person name="Almeida N.F. Jr."/>
            <person name="Woo L."/>
            <person name="Chen Y."/>
            <person name="Paulsen I.T."/>
            <person name="Eisen J.A."/>
            <person name="Karp P.D."/>
            <person name="Bovee D. Sr."/>
            <person name="Chapman P."/>
            <person name="Clendenning J."/>
            <person name="Deatherage G."/>
            <person name="Gillet W."/>
            <person name="Grant C."/>
            <person name="Kutyavin T."/>
            <person name="Levy R."/>
            <person name="Li M.-J."/>
            <person name="McClelland E."/>
            <person name="Palmieri A."/>
            <person name="Raymond C."/>
            <person name="Rouse G."/>
            <person name="Saenphimmachak C."/>
            <person name="Wu Z."/>
            <person name="Romero P."/>
            <person name="Gordon D."/>
            <person name="Zhang S."/>
            <person name="Yoo H."/>
            <person name="Tao Y."/>
            <person name="Biddle P."/>
            <person name="Jung M."/>
            <person name="Krespan W."/>
            <person name="Perry M."/>
            <person name="Gordon-Kamm B."/>
            <person name="Liao L."/>
            <person name="Kim S."/>
            <person name="Hendrick C."/>
            <person name="Zhao Z.-Y."/>
            <person name="Dolan M."/>
            <person name="Chumley F."/>
            <person name="Tingey S.V."/>
            <person name="Tomb J.-F."/>
            <person name="Gordon M.P."/>
            <person name="Olson M.V."/>
            <person name="Nester E.W."/>
        </authorList>
    </citation>
    <scope>NUCLEOTIDE SEQUENCE [LARGE SCALE GENOMIC DNA]</scope>
    <source>
        <strain>C58 / ATCC 33970</strain>
    </source>
</reference>
<reference key="3">
    <citation type="journal article" date="2001" name="Science">
        <title>Genome sequence of the plant pathogen and biotechnology agent Agrobacterium tumefaciens C58.</title>
        <authorList>
            <person name="Goodner B."/>
            <person name="Hinkle G."/>
            <person name="Gattung S."/>
            <person name="Miller N."/>
            <person name="Blanchard M."/>
            <person name="Qurollo B."/>
            <person name="Goldman B.S."/>
            <person name="Cao Y."/>
            <person name="Askenazi M."/>
            <person name="Halling C."/>
            <person name="Mullin L."/>
            <person name="Houmiel K."/>
            <person name="Gordon J."/>
            <person name="Vaudin M."/>
            <person name="Iartchouk O."/>
            <person name="Epp A."/>
            <person name="Liu F."/>
            <person name="Wollam C."/>
            <person name="Allinger M."/>
            <person name="Doughty D."/>
            <person name="Scott C."/>
            <person name="Lappas C."/>
            <person name="Markelz B."/>
            <person name="Flanagan C."/>
            <person name="Crowell C."/>
            <person name="Gurson J."/>
            <person name="Lomo C."/>
            <person name="Sear C."/>
            <person name="Strub G."/>
            <person name="Cielo C."/>
            <person name="Slater S."/>
        </authorList>
    </citation>
    <scope>NUCLEOTIDE SEQUENCE [LARGE SCALE GENOMIC DNA]</scope>
    <source>
        <strain>C58 / ATCC 33970</strain>
    </source>
</reference>
<comment type="function">
    <text>Assembles around the rod to form the L-ring and probably protects the motor/basal body from shearing forces during rotation.</text>
</comment>
<comment type="subunit">
    <text evidence="1">The basal body constitutes a major portion of the flagellar organelle and consists of four rings (L,P,S, and M) mounted on a central rod.</text>
</comment>
<comment type="subcellular location">
    <subcellularLocation>
        <location evidence="1">Periplasm</location>
    </subcellularLocation>
    <subcellularLocation>
        <location evidence="1">Bacterial flagellum basal body</location>
    </subcellularLocation>
</comment>
<comment type="similarity">
    <text evidence="3">Belongs to the FlgI family.</text>
</comment>
<accession>Q44340</accession>
<evidence type="ECO:0000250" key="1"/>
<evidence type="ECO:0000255" key="2"/>
<evidence type="ECO:0000305" key="3"/>
<name>FLGI_AGRFC</name>